<feature type="chain" id="PRO_1000006291" description="Serine hydroxymethyltransferase">
    <location>
        <begin position="1"/>
        <end position="414"/>
    </location>
</feature>
<feature type="binding site" evidence="1">
    <location>
        <position position="121"/>
    </location>
    <ligand>
        <name>(6S)-5,6,7,8-tetrahydrofolate</name>
        <dbReference type="ChEBI" id="CHEBI:57453"/>
    </ligand>
</feature>
<feature type="binding site" evidence="1">
    <location>
        <begin position="125"/>
        <end position="127"/>
    </location>
    <ligand>
        <name>(6S)-5,6,7,8-tetrahydrofolate</name>
        <dbReference type="ChEBI" id="CHEBI:57453"/>
    </ligand>
</feature>
<feature type="site" description="Plays an important role in substrate specificity" evidence="1">
    <location>
        <position position="228"/>
    </location>
</feature>
<feature type="modified residue" description="N6-(pyridoxal phosphate)lysine" evidence="1">
    <location>
        <position position="229"/>
    </location>
</feature>
<evidence type="ECO:0000255" key="1">
    <source>
        <dbReference type="HAMAP-Rule" id="MF_00051"/>
    </source>
</evidence>
<dbReference type="EC" id="2.1.2.1" evidence="1"/>
<dbReference type="EMBL" id="CP000529">
    <property type="protein sequence ID" value="ABM38206.1"/>
    <property type="molecule type" value="Genomic_DNA"/>
</dbReference>
<dbReference type="RefSeq" id="WP_011802280.1">
    <property type="nucleotide sequence ID" value="NC_008781.1"/>
</dbReference>
<dbReference type="SMR" id="A1VRC8"/>
<dbReference type="STRING" id="365044.Pnap_2907"/>
<dbReference type="KEGG" id="pna:Pnap_2907"/>
<dbReference type="eggNOG" id="COG0112">
    <property type="taxonomic scope" value="Bacteria"/>
</dbReference>
<dbReference type="HOGENOM" id="CLU_022477_2_1_4"/>
<dbReference type="OrthoDB" id="9803846at2"/>
<dbReference type="UniPathway" id="UPA00193"/>
<dbReference type="UniPathway" id="UPA00288">
    <property type="reaction ID" value="UER01023"/>
</dbReference>
<dbReference type="Proteomes" id="UP000000644">
    <property type="component" value="Chromosome"/>
</dbReference>
<dbReference type="GO" id="GO:0005829">
    <property type="term" value="C:cytosol"/>
    <property type="evidence" value="ECO:0007669"/>
    <property type="project" value="TreeGrafter"/>
</dbReference>
<dbReference type="GO" id="GO:0004372">
    <property type="term" value="F:glycine hydroxymethyltransferase activity"/>
    <property type="evidence" value="ECO:0007669"/>
    <property type="project" value="UniProtKB-UniRule"/>
</dbReference>
<dbReference type="GO" id="GO:0030170">
    <property type="term" value="F:pyridoxal phosphate binding"/>
    <property type="evidence" value="ECO:0007669"/>
    <property type="project" value="UniProtKB-UniRule"/>
</dbReference>
<dbReference type="GO" id="GO:0019264">
    <property type="term" value="P:glycine biosynthetic process from serine"/>
    <property type="evidence" value="ECO:0007669"/>
    <property type="project" value="UniProtKB-UniRule"/>
</dbReference>
<dbReference type="GO" id="GO:0035999">
    <property type="term" value="P:tetrahydrofolate interconversion"/>
    <property type="evidence" value="ECO:0007669"/>
    <property type="project" value="UniProtKB-UniRule"/>
</dbReference>
<dbReference type="CDD" id="cd00378">
    <property type="entry name" value="SHMT"/>
    <property type="match status" value="1"/>
</dbReference>
<dbReference type="FunFam" id="3.40.640.10:FF:000001">
    <property type="entry name" value="Serine hydroxymethyltransferase"/>
    <property type="match status" value="1"/>
</dbReference>
<dbReference type="FunFam" id="3.90.1150.10:FF:000003">
    <property type="entry name" value="Serine hydroxymethyltransferase"/>
    <property type="match status" value="1"/>
</dbReference>
<dbReference type="Gene3D" id="3.90.1150.10">
    <property type="entry name" value="Aspartate Aminotransferase, domain 1"/>
    <property type="match status" value="1"/>
</dbReference>
<dbReference type="Gene3D" id="3.40.640.10">
    <property type="entry name" value="Type I PLP-dependent aspartate aminotransferase-like (Major domain)"/>
    <property type="match status" value="1"/>
</dbReference>
<dbReference type="HAMAP" id="MF_00051">
    <property type="entry name" value="SHMT"/>
    <property type="match status" value="1"/>
</dbReference>
<dbReference type="InterPro" id="IPR015424">
    <property type="entry name" value="PyrdxlP-dep_Trfase"/>
</dbReference>
<dbReference type="InterPro" id="IPR015421">
    <property type="entry name" value="PyrdxlP-dep_Trfase_major"/>
</dbReference>
<dbReference type="InterPro" id="IPR015422">
    <property type="entry name" value="PyrdxlP-dep_Trfase_small"/>
</dbReference>
<dbReference type="InterPro" id="IPR001085">
    <property type="entry name" value="Ser_HO-MeTrfase"/>
</dbReference>
<dbReference type="InterPro" id="IPR049943">
    <property type="entry name" value="Ser_HO-MeTrfase-like"/>
</dbReference>
<dbReference type="InterPro" id="IPR019798">
    <property type="entry name" value="Ser_HO-MeTrfase_PLP_BS"/>
</dbReference>
<dbReference type="InterPro" id="IPR039429">
    <property type="entry name" value="SHMT-like_dom"/>
</dbReference>
<dbReference type="NCBIfam" id="NF000586">
    <property type="entry name" value="PRK00011.1"/>
    <property type="match status" value="1"/>
</dbReference>
<dbReference type="PANTHER" id="PTHR11680">
    <property type="entry name" value="SERINE HYDROXYMETHYLTRANSFERASE"/>
    <property type="match status" value="1"/>
</dbReference>
<dbReference type="PANTHER" id="PTHR11680:SF50">
    <property type="entry name" value="SERINE HYDROXYMETHYLTRANSFERASE"/>
    <property type="match status" value="1"/>
</dbReference>
<dbReference type="Pfam" id="PF00464">
    <property type="entry name" value="SHMT"/>
    <property type="match status" value="1"/>
</dbReference>
<dbReference type="PIRSF" id="PIRSF000412">
    <property type="entry name" value="SHMT"/>
    <property type="match status" value="1"/>
</dbReference>
<dbReference type="SUPFAM" id="SSF53383">
    <property type="entry name" value="PLP-dependent transferases"/>
    <property type="match status" value="1"/>
</dbReference>
<dbReference type="PROSITE" id="PS00096">
    <property type="entry name" value="SHMT"/>
    <property type="match status" value="1"/>
</dbReference>
<accession>A1VRC8</accession>
<sequence length="414" mass="44850">MYHRNILIEQTDPEIFAAIQAENARQEHHIELIASENYASPAVMAAQGSQLTNKYAEGYPGRRYYGGCEHVDVAEQLAIDRVKQIFGADAANVQPHCGASANEAVFLAFLKPGDTIMGMSLAEGGHLTHGMALNMSGKWFNVVSYGLNDKEEIDYEAMERKAHETKPKLIIAGASAYSLAIDFERFARVAKDVGAIFMVDMAHYAGLIAAGIYPNPVPHADIVTSTTHKSLRGPRGGIILMKAQHEKIINSAIFPGLQGGPLMHVIAAKAIAFKEALSPEFKIYQQQVLKNAQIVAETLTQRGLRIVSGRTESHVMLVDLRAKGITGKEAEAVLGSAHMTINKNAIPNDPEKPMVTSGVRIGTPAMTTRGFGDEEARMTANLVADVLDNPRDAANIEAVRAKVHALTSRFPVYG</sequence>
<gene>
    <name evidence="1" type="primary">glyA</name>
    <name type="ordered locus">Pnap_2907</name>
</gene>
<name>GLYA_POLNA</name>
<proteinExistence type="inferred from homology"/>
<reference key="1">
    <citation type="journal article" date="2009" name="Environ. Microbiol.">
        <title>The genome of Polaromonas naphthalenivorans strain CJ2, isolated from coal tar-contaminated sediment, reveals physiological and metabolic versatility and evolution through extensive horizontal gene transfer.</title>
        <authorList>
            <person name="Yagi J.M."/>
            <person name="Sims D."/>
            <person name="Brettin T."/>
            <person name="Bruce D."/>
            <person name="Madsen E.L."/>
        </authorList>
    </citation>
    <scope>NUCLEOTIDE SEQUENCE [LARGE SCALE GENOMIC DNA]</scope>
    <source>
        <strain>CJ2</strain>
    </source>
</reference>
<protein>
    <recommendedName>
        <fullName evidence="1">Serine hydroxymethyltransferase</fullName>
        <shortName evidence="1">SHMT</shortName>
        <shortName evidence="1">Serine methylase</shortName>
        <ecNumber evidence="1">2.1.2.1</ecNumber>
    </recommendedName>
</protein>
<organism>
    <name type="scientific">Polaromonas naphthalenivorans (strain CJ2)</name>
    <dbReference type="NCBI Taxonomy" id="365044"/>
    <lineage>
        <taxon>Bacteria</taxon>
        <taxon>Pseudomonadati</taxon>
        <taxon>Pseudomonadota</taxon>
        <taxon>Betaproteobacteria</taxon>
        <taxon>Burkholderiales</taxon>
        <taxon>Comamonadaceae</taxon>
        <taxon>Polaromonas</taxon>
    </lineage>
</organism>
<comment type="function">
    <text evidence="1">Catalyzes the reversible interconversion of serine and glycine with tetrahydrofolate (THF) serving as the one-carbon carrier. This reaction serves as the major source of one-carbon groups required for the biosynthesis of purines, thymidylate, methionine, and other important biomolecules. Also exhibits THF-independent aldolase activity toward beta-hydroxyamino acids, producing glycine and aldehydes, via a retro-aldol mechanism.</text>
</comment>
<comment type="catalytic activity">
    <reaction evidence="1">
        <text>(6R)-5,10-methylene-5,6,7,8-tetrahydrofolate + glycine + H2O = (6S)-5,6,7,8-tetrahydrofolate + L-serine</text>
        <dbReference type="Rhea" id="RHEA:15481"/>
        <dbReference type="ChEBI" id="CHEBI:15377"/>
        <dbReference type="ChEBI" id="CHEBI:15636"/>
        <dbReference type="ChEBI" id="CHEBI:33384"/>
        <dbReference type="ChEBI" id="CHEBI:57305"/>
        <dbReference type="ChEBI" id="CHEBI:57453"/>
        <dbReference type="EC" id="2.1.2.1"/>
    </reaction>
</comment>
<comment type="cofactor">
    <cofactor evidence="1">
        <name>pyridoxal 5'-phosphate</name>
        <dbReference type="ChEBI" id="CHEBI:597326"/>
    </cofactor>
</comment>
<comment type="pathway">
    <text evidence="1">One-carbon metabolism; tetrahydrofolate interconversion.</text>
</comment>
<comment type="pathway">
    <text evidence="1">Amino-acid biosynthesis; glycine biosynthesis; glycine from L-serine: step 1/1.</text>
</comment>
<comment type="subunit">
    <text evidence="1">Homodimer.</text>
</comment>
<comment type="subcellular location">
    <subcellularLocation>
        <location evidence="1">Cytoplasm</location>
    </subcellularLocation>
</comment>
<comment type="similarity">
    <text evidence="1">Belongs to the SHMT family.</text>
</comment>
<keyword id="KW-0028">Amino-acid biosynthesis</keyword>
<keyword id="KW-0963">Cytoplasm</keyword>
<keyword id="KW-0554">One-carbon metabolism</keyword>
<keyword id="KW-0663">Pyridoxal phosphate</keyword>
<keyword id="KW-1185">Reference proteome</keyword>
<keyword id="KW-0808">Transferase</keyword>